<feature type="chain" id="PRO_1000024488" description="Replication factor C small subunit">
    <location>
        <begin position="1"/>
        <end position="315"/>
    </location>
</feature>
<feature type="binding site" evidence="1">
    <location>
        <begin position="43"/>
        <end position="50"/>
    </location>
    <ligand>
        <name>ATP</name>
        <dbReference type="ChEBI" id="CHEBI:30616"/>
    </ligand>
</feature>
<sequence>MQKPWVEKYRPQTLSEVVGHHEIIKRLTNYVEKKSMPHLLFSGSPGVGKTTAALALAKDLYGETWRENFLELNSSDERGIDVIRTKVKDFARTKPIGDAPFKVIFLDESDALTSDAQNALRRTMEKYSDICRFVLSCNYPSKIIPPIQSRCAIFRFSPLKTEDLVENLKEISEKENLTLEKGGIDAIIYVSEGDMRKAINVLQTAAAVSDTVTEEIVYKVASKARPDEIKKMTQLALNGKFVESREQLYNLMIDWGMSGEDILIQIFREVPNLDISEKEKVHLVEAIGECDFRIVEGSNERIQLSALLAKMGILE</sequence>
<proteinExistence type="inferred from homology"/>
<dbReference type="EMBL" id="CP000745">
    <property type="protein sequence ID" value="ABR66487.1"/>
    <property type="molecule type" value="Genomic_DNA"/>
</dbReference>
<dbReference type="SMR" id="A6VJ61"/>
<dbReference type="STRING" id="426368.MmarC7_1424"/>
<dbReference type="KEGG" id="mmz:MmarC7_1424"/>
<dbReference type="eggNOG" id="arCOG00469">
    <property type="taxonomic scope" value="Archaea"/>
</dbReference>
<dbReference type="HOGENOM" id="CLU_042324_2_1_2"/>
<dbReference type="OrthoDB" id="7928at2157"/>
<dbReference type="GO" id="GO:0005663">
    <property type="term" value="C:DNA replication factor C complex"/>
    <property type="evidence" value="ECO:0007669"/>
    <property type="project" value="InterPro"/>
</dbReference>
<dbReference type="GO" id="GO:0005524">
    <property type="term" value="F:ATP binding"/>
    <property type="evidence" value="ECO:0007669"/>
    <property type="project" value="UniProtKB-UniRule"/>
</dbReference>
<dbReference type="GO" id="GO:0016887">
    <property type="term" value="F:ATP hydrolysis activity"/>
    <property type="evidence" value="ECO:0007669"/>
    <property type="project" value="InterPro"/>
</dbReference>
<dbReference type="GO" id="GO:0003677">
    <property type="term" value="F:DNA binding"/>
    <property type="evidence" value="ECO:0007669"/>
    <property type="project" value="InterPro"/>
</dbReference>
<dbReference type="GO" id="GO:0003689">
    <property type="term" value="F:DNA clamp loader activity"/>
    <property type="evidence" value="ECO:0007669"/>
    <property type="project" value="UniProtKB-UniRule"/>
</dbReference>
<dbReference type="GO" id="GO:0006281">
    <property type="term" value="P:DNA repair"/>
    <property type="evidence" value="ECO:0007669"/>
    <property type="project" value="TreeGrafter"/>
</dbReference>
<dbReference type="GO" id="GO:0006261">
    <property type="term" value="P:DNA-templated DNA replication"/>
    <property type="evidence" value="ECO:0007669"/>
    <property type="project" value="TreeGrafter"/>
</dbReference>
<dbReference type="CDD" id="cd00009">
    <property type="entry name" value="AAA"/>
    <property type="match status" value="1"/>
</dbReference>
<dbReference type="CDD" id="cd18140">
    <property type="entry name" value="HLD_clamp_RFC"/>
    <property type="match status" value="1"/>
</dbReference>
<dbReference type="FunFam" id="1.20.272.10:FF:000029">
    <property type="entry name" value="Replication factor C small subunit"/>
    <property type="match status" value="1"/>
</dbReference>
<dbReference type="FunFam" id="1.10.8.60:FF:000012">
    <property type="entry name" value="Replication factor C subunit 4"/>
    <property type="match status" value="1"/>
</dbReference>
<dbReference type="FunFam" id="3.40.50.300:FF:000129">
    <property type="entry name" value="Replication factor C subunit 5"/>
    <property type="match status" value="1"/>
</dbReference>
<dbReference type="Gene3D" id="1.10.8.60">
    <property type="match status" value="1"/>
</dbReference>
<dbReference type="Gene3D" id="1.20.272.10">
    <property type="match status" value="1"/>
</dbReference>
<dbReference type="Gene3D" id="3.40.50.300">
    <property type="entry name" value="P-loop containing nucleotide triphosphate hydrolases"/>
    <property type="match status" value="1"/>
</dbReference>
<dbReference type="HAMAP" id="MF_01509">
    <property type="entry name" value="RfcS"/>
    <property type="match status" value="1"/>
</dbReference>
<dbReference type="InterPro" id="IPR003593">
    <property type="entry name" value="AAA+_ATPase"/>
</dbReference>
<dbReference type="InterPro" id="IPR003959">
    <property type="entry name" value="ATPase_AAA_core"/>
</dbReference>
<dbReference type="InterPro" id="IPR008921">
    <property type="entry name" value="DNA_pol3_clamp-load_cplx_C"/>
</dbReference>
<dbReference type="InterPro" id="IPR050238">
    <property type="entry name" value="DNA_Rep/Repair_Clamp_Loader"/>
</dbReference>
<dbReference type="InterPro" id="IPR027417">
    <property type="entry name" value="P-loop_NTPase"/>
</dbReference>
<dbReference type="InterPro" id="IPR023748">
    <property type="entry name" value="Rep_factor-C_ssu_arc"/>
</dbReference>
<dbReference type="InterPro" id="IPR013748">
    <property type="entry name" value="Rep_factorC_C"/>
</dbReference>
<dbReference type="InterPro" id="IPR047854">
    <property type="entry name" value="RFC_lid"/>
</dbReference>
<dbReference type="NCBIfam" id="NF001679">
    <property type="entry name" value="PRK00440.1"/>
    <property type="match status" value="1"/>
</dbReference>
<dbReference type="PANTHER" id="PTHR11669">
    <property type="entry name" value="REPLICATION FACTOR C / DNA POLYMERASE III GAMMA-TAU SUBUNIT"/>
    <property type="match status" value="1"/>
</dbReference>
<dbReference type="PANTHER" id="PTHR11669:SF20">
    <property type="entry name" value="REPLICATION FACTOR C SUBUNIT 4"/>
    <property type="match status" value="1"/>
</dbReference>
<dbReference type="Pfam" id="PF00004">
    <property type="entry name" value="AAA"/>
    <property type="match status" value="1"/>
</dbReference>
<dbReference type="Pfam" id="PF21960">
    <property type="entry name" value="RCF1-5-like_lid"/>
    <property type="match status" value="1"/>
</dbReference>
<dbReference type="Pfam" id="PF08542">
    <property type="entry name" value="Rep_fac_C"/>
    <property type="match status" value="1"/>
</dbReference>
<dbReference type="SMART" id="SM00382">
    <property type="entry name" value="AAA"/>
    <property type="match status" value="1"/>
</dbReference>
<dbReference type="SUPFAM" id="SSF52540">
    <property type="entry name" value="P-loop containing nucleoside triphosphate hydrolases"/>
    <property type="match status" value="1"/>
</dbReference>
<dbReference type="SUPFAM" id="SSF48019">
    <property type="entry name" value="post-AAA+ oligomerization domain-like"/>
    <property type="match status" value="1"/>
</dbReference>
<organism>
    <name type="scientific">Methanococcus maripaludis (strain C7 / ATCC BAA-1331)</name>
    <dbReference type="NCBI Taxonomy" id="426368"/>
    <lineage>
        <taxon>Archaea</taxon>
        <taxon>Methanobacteriati</taxon>
        <taxon>Methanobacteriota</taxon>
        <taxon>Methanomada group</taxon>
        <taxon>Methanococci</taxon>
        <taxon>Methanococcales</taxon>
        <taxon>Methanococcaceae</taxon>
        <taxon>Methanococcus</taxon>
    </lineage>
</organism>
<evidence type="ECO:0000255" key="1">
    <source>
        <dbReference type="HAMAP-Rule" id="MF_01509"/>
    </source>
</evidence>
<reference key="1">
    <citation type="submission" date="2007-06" db="EMBL/GenBank/DDBJ databases">
        <title>Complete sequence of Methanococcus maripaludis C7.</title>
        <authorList>
            <consortium name="US DOE Joint Genome Institute"/>
            <person name="Copeland A."/>
            <person name="Lucas S."/>
            <person name="Lapidus A."/>
            <person name="Barry K."/>
            <person name="Glavina del Rio T."/>
            <person name="Dalin E."/>
            <person name="Tice H."/>
            <person name="Pitluck S."/>
            <person name="Clum A."/>
            <person name="Schmutz J."/>
            <person name="Larimer F."/>
            <person name="Land M."/>
            <person name="Hauser L."/>
            <person name="Kyrpides N."/>
            <person name="Anderson I."/>
            <person name="Sieprawska-Lupa M."/>
            <person name="Whitman W.B."/>
            <person name="Richardson P."/>
        </authorList>
    </citation>
    <scope>NUCLEOTIDE SEQUENCE [LARGE SCALE GENOMIC DNA]</scope>
    <source>
        <strain>C7 / ATCC BAA-1331</strain>
    </source>
</reference>
<accession>A6VJ61</accession>
<name>RFCS_METM7</name>
<gene>
    <name evidence="1" type="primary">rfcS</name>
    <name type="ordered locus">MmarC7_1424</name>
</gene>
<keyword id="KW-0067">ATP-binding</keyword>
<keyword id="KW-0235">DNA replication</keyword>
<keyword id="KW-0547">Nucleotide-binding</keyword>
<comment type="function">
    <text evidence="1">Part of the RFC clamp loader complex which loads the PCNA sliding clamp onto DNA.</text>
</comment>
<comment type="subunit">
    <text evidence="1">Heteromultimer composed of small subunits (RfcS) and large subunits (RfcL).</text>
</comment>
<comment type="similarity">
    <text evidence="1">Belongs to the activator 1 small subunits family. RfcS subfamily.</text>
</comment>
<protein>
    <recommendedName>
        <fullName evidence="1">Replication factor C small subunit</fullName>
        <shortName evidence="1">RFC small subunit</shortName>
    </recommendedName>
    <alternativeName>
        <fullName evidence="1">Clamp loader small subunit</fullName>
    </alternativeName>
</protein>